<organism>
    <name type="scientific">Enterococcus faecalis (strain ATCC 700802 / V583)</name>
    <dbReference type="NCBI Taxonomy" id="226185"/>
    <lineage>
        <taxon>Bacteria</taxon>
        <taxon>Bacillati</taxon>
        <taxon>Bacillota</taxon>
        <taxon>Bacilli</taxon>
        <taxon>Lactobacillales</taxon>
        <taxon>Enterococcaceae</taxon>
        <taxon>Enterococcus</taxon>
    </lineage>
</organism>
<feature type="chain" id="PRO_0000176274" description="Elongation factor 4">
    <location>
        <begin position="1"/>
        <end position="611"/>
    </location>
</feature>
<feature type="domain" description="tr-type G">
    <location>
        <begin position="11"/>
        <end position="193"/>
    </location>
</feature>
<feature type="binding site" evidence="1">
    <location>
        <begin position="23"/>
        <end position="28"/>
    </location>
    <ligand>
        <name>GTP</name>
        <dbReference type="ChEBI" id="CHEBI:37565"/>
    </ligand>
</feature>
<feature type="binding site" evidence="1">
    <location>
        <begin position="140"/>
        <end position="143"/>
    </location>
    <ligand>
        <name>GTP</name>
        <dbReference type="ChEBI" id="CHEBI:37565"/>
    </ligand>
</feature>
<dbReference type="EC" id="3.6.5.n1" evidence="1"/>
<dbReference type="EMBL" id="AE016830">
    <property type="protein sequence ID" value="AAO82077.1"/>
    <property type="molecule type" value="Genomic_DNA"/>
</dbReference>
<dbReference type="RefSeq" id="NP_816007.1">
    <property type="nucleotide sequence ID" value="NC_004668.1"/>
</dbReference>
<dbReference type="RefSeq" id="WP_010706535.1">
    <property type="nucleotide sequence ID" value="NZ_KE136528.1"/>
</dbReference>
<dbReference type="SMR" id="Q831Z0"/>
<dbReference type="STRING" id="226185.EF_2352"/>
<dbReference type="EnsemblBacteria" id="AAO82077">
    <property type="protein sequence ID" value="AAO82077"/>
    <property type="gene ID" value="EF_2352"/>
</dbReference>
<dbReference type="KEGG" id="efa:EF2352"/>
<dbReference type="PATRIC" id="fig|226185.45.peg.1183"/>
<dbReference type="eggNOG" id="COG0481">
    <property type="taxonomic scope" value="Bacteria"/>
</dbReference>
<dbReference type="HOGENOM" id="CLU_009995_3_3_9"/>
<dbReference type="Proteomes" id="UP000001415">
    <property type="component" value="Chromosome"/>
</dbReference>
<dbReference type="GO" id="GO:0005886">
    <property type="term" value="C:plasma membrane"/>
    <property type="evidence" value="ECO:0007669"/>
    <property type="project" value="UniProtKB-SubCell"/>
</dbReference>
<dbReference type="GO" id="GO:0005525">
    <property type="term" value="F:GTP binding"/>
    <property type="evidence" value="ECO:0007669"/>
    <property type="project" value="UniProtKB-UniRule"/>
</dbReference>
<dbReference type="GO" id="GO:0003924">
    <property type="term" value="F:GTPase activity"/>
    <property type="evidence" value="ECO:0007669"/>
    <property type="project" value="UniProtKB-UniRule"/>
</dbReference>
<dbReference type="GO" id="GO:0043022">
    <property type="term" value="F:ribosome binding"/>
    <property type="evidence" value="ECO:0007669"/>
    <property type="project" value="UniProtKB-UniRule"/>
</dbReference>
<dbReference type="GO" id="GO:0003746">
    <property type="term" value="F:translation elongation factor activity"/>
    <property type="evidence" value="ECO:0007669"/>
    <property type="project" value="UniProtKB-UniRule"/>
</dbReference>
<dbReference type="GO" id="GO:0045727">
    <property type="term" value="P:positive regulation of translation"/>
    <property type="evidence" value="ECO:0007669"/>
    <property type="project" value="UniProtKB-UniRule"/>
</dbReference>
<dbReference type="CDD" id="cd03699">
    <property type="entry name" value="EF4_II"/>
    <property type="match status" value="1"/>
</dbReference>
<dbReference type="CDD" id="cd16260">
    <property type="entry name" value="EF4_III"/>
    <property type="match status" value="1"/>
</dbReference>
<dbReference type="CDD" id="cd01890">
    <property type="entry name" value="LepA"/>
    <property type="match status" value="1"/>
</dbReference>
<dbReference type="CDD" id="cd03709">
    <property type="entry name" value="lepA_C"/>
    <property type="match status" value="1"/>
</dbReference>
<dbReference type="FunFam" id="3.40.50.300:FF:000078">
    <property type="entry name" value="Elongation factor 4"/>
    <property type="match status" value="1"/>
</dbReference>
<dbReference type="FunFam" id="2.40.30.10:FF:000015">
    <property type="entry name" value="Translation factor GUF1, mitochondrial"/>
    <property type="match status" value="1"/>
</dbReference>
<dbReference type="FunFam" id="3.30.70.240:FF:000007">
    <property type="entry name" value="Translation factor GUF1, mitochondrial"/>
    <property type="match status" value="1"/>
</dbReference>
<dbReference type="FunFam" id="3.30.70.2570:FF:000001">
    <property type="entry name" value="Translation factor GUF1, mitochondrial"/>
    <property type="match status" value="1"/>
</dbReference>
<dbReference type="FunFam" id="3.30.70.870:FF:000004">
    <property type="entry name" value="Translation factor GUF1, mitochondrial"/>
    <property type="match status" value="1"/>
</dbReference>
<dbReference type="Gene3D" id="3.30.70.240">
    <property type="match status" value="1"/>
</dbReference>
<dbReference type="Gene3D" id="3.30.70.2570">
    <property type="entry name" value="Elongation factor 4, C-terminal domain"/>
    <property type="match status" value="1"/>
</dbReference>
<dbReference type="Gene3D" id="3.30.70.870">
    <property type="entry name" value="Elongation Factor G (Translational Gtpase), domain 3"/>
    <property type="match status" value="1"/>
</dbReference>
<dbReference type="Gene3D" id="3.40.50.300">
    <property type="entry name" value="P-loop containing nucleotide triphosphate hydrolases"/>
    <property type="match status" value="1"/>
</dbReference>
<dbReference type="Gene3D" id="2.40.30.10">
    <property type="entry name" value="Translation factors"/>
    <property type="match status" value="1"/>
</dbReference>
<dbReference type="HAMAP" id="MF_00071">
    <property type="entry name" value="LepA"/>
    <property type="match status" value="1"/>
</dbReference>
<dbReference type="InterPro" id="IPR006297">
    <property type="entry name" value="EF-4"/>
</dbReference>
<dbReference type="InterPro" id="IPR035647">
    <property type="entry name" value="EFG_III/V"/>
</dbReference>
<dbReference type="InterPro" id="IPR000640">
    <property type="entry name" value="EFG_V-like"/>
</dbReference>
<dbReference type="InterPro" id="IPR004161">
    <property type="entry name" value="EFTu-like_2"/>
</dbReference>
<dbReference type="InterPro" id="IPR031157">
    <property type="entry name" value="G_TR_CS"/>
</dbReference>
<dbReference type="InterPro" id="IPR038363">
    <property type="entry name" value="LepA_C_sf"/>
</dbReference>
<dbReference type="InterPro" id="IPR013842">
    <property type="entry name" value="LepA_CTD"/>
</dbReference>
<dbReference type="InterPro" id="IPR035654">
    <property type="entry name" value="LepA_IV"/>
</dbReference>
<dbReference type="InterPro" id="IPR027417">
    <property type="entry name" value="P-loop_NTPase"/>
</dbReference>
<dbReference type="InterPro" id="IPR005225">
    <property type="entry name" value="Small_GTP-bd"/>
</dbReference>
<dbReference type="InterPro" id="IPR000795">
    <property type="entry name" value="T_Tr_GTP-bd_dom"/>
</dbReference>
<dbReference type="InterPro" id="IPR009000">
    <property type="entry name" value="Transl_B-barrel_sf"/>
</dbReference>
<dbReference type="NCBIfam" id="TIGR01393">
    <property type="entry name" value="lepA"/>
    <property type="match status" value="1"/>
</dbReference>
<dbReference type="NCBIfam" id="TIGR00231">
    <property type="entry name" value="small_GTP"/>
    <property type="match status" value="1"/>
</dbReference>
<dbReference type="PANTHER" id="PTHR43512:SF4">
    <property type="entry name" value="TRANSLATION FACTOR GUF1 HOMOLOG, CHLOROPLASTIC"/>
    <property type="match status" value="1"/>
</dbReference>
<dbReference type="PANTHER" id="PTHR43512">
    <property type="entry name" value="TRANSLATION FACTOR GUF1-RELATED"/>
    <property type="match status" value="1"/>
</dbReference>
<dbReference type="Pfam" id="PF00679">
    <property type="entry name" value="EFG_C"/>
    <property type="match status" value="1"/>
</dbReference>
<dbReference type="Pfam" id="PF00009">
    <property type="entry name" value="GTP_EFTU"/>
    <property type="match status" value="1"/>
</dbReference>
<dbReference type="Pfam" id="PF03144">
    <property type="entry name" value="GTP_EFTU_D2"/>
    <property type="match status" value="1"/>
</dbReference>
<dbReference type="Pfam" id="PF06421">
    <property type="entry name" value="LepA_C"/>
    <property type="match status" value="1"/>
</dbReference>
<dbReference type="PRINTS" id="PR00315">
    <property type="entry name" value="ELONGATNFCT"/>
</dbReference>
<dbReference type="SMART" id="SM00838">
    <property type="entry name" value="EFG_C"/>
    <property type="match status" value="1"/>
</dbReference>
<dbReference type="SUPFAM" id="SSF54980">
    <property type="entry name" value="EF-G C-terminal domain-like"/>
    <property type="match status" value="2"/>
</dbReference>
<dbReference type="SUPFAM" id="SSF52540">
    <property type="entry name" value="P-loop containing nucleoside triphosphate hydrolases"/>
    <property type="match status" value="1"/>
</dbReference>
<dbReference type="SUPFAM" id="SSF50447">
    <property type="entry name" value="Translation proteins"/>
    <property type="match status" value="1"/>
</dbReference>
<dbReference type="PROSITE" id="PS00301">
    <property type="entry name" value="G_TR_1"/>
    <property type="match status" value="1"/>
</dbReference>
<dbReference type="PROSITE" id="PS51722">
    <property type="entry name" value="G_TR_2"/>
    <property type="match status" value="1"/>
</dbReference>
<protein>
    <recommendedName>
        <fullName evidence="1">Elongation factor 4</fullName>
        <shortName evidence="1">EF-4</shortName>
        <ecNumber evidence="1">3.6.5.n1</ecNumber>
    </recommendedName>
    <alternativeName>
        <fullName evidence="1">Ribosomal back-translocase LepA</fullName>
    </alternativeName>
</protein>
<name>LEPA_ENTFA</name>
<proteinExistence type="inferred from homology"/>
<reference key="1">
    <citation type="journal article" date="2003" name="Science">
        <title>Role of mobile DNA in the evolution of vancomycin-resistant Enterococcus faecalis.</title>
        <authorList>
            <person name="Paulsen I.T."/>
            <person name="Banerjei L."/>
            <person name="Myers G.S.A."/>
            <person name="Nelson K.E."/>
            <person name="Seshadri R."/>
            <person name="Read T.D."/>
            <person name="Fouts D.E."/>
            <person name="Eisen J.A."/>
            <person name="Gill S.R."/>
            <person name="Heidelberg J.F."/>
            <person name="Tettelin H."/>
            <person name="Dodson R.J."/>
            <person name="Umayam L.A."/>
            <person name="Brinkac L.M."/>
            <person name="Beanan M.J."/>
            <person name="Daugherty S.C."/>
            <person name="DeBoy R.T."/>
            <person name="Durkin S.A."/>
            <person name="Kolonay J.F."/>
            <person name="Madupu R."/>
            <person name="Nelson W.C."/>
            <person name="Vamathevan J.J."/>
            <person name="Tran B."/>
            <person name="Upton J."/>
            <person name="Hansen T."/>
            <person name="Shetty J."/>
            <person name="Khouri H.M."/>
            <person name="Utterback T.R."/>
            <person name="Radune D."/>
            <person name="Ketchum K.A."/>
            <person name="Dougherty B.A."/>
            <person name="Fraser C.M."/>
        </authorList>
    </citation>
    <scope>NUCLEOTIDE SEQUENCE [LARGE SCALE GENOMIC DNA]</scope>
    <source>
        <strain>ATCC 700802 / V583</strain>
    </source>
</reference>
<gene>
    <name evidence="1" type="primary">lepA</name>
    <name type="ordered locus">EF_2352</name>
</gene>
<accession>Q831Z0</accession>
<evidence type="ECO:0000255" key="1">
    <source>
        <dbReference type="HAMAP-Rule" id="MF_00071"/>
    </source>
</evidence>
<comment type="function">
    <text evidence="1">Required for accurate and efficient protein synthesis under certain stress conditions. May act as a fidelity factor of the translation reaction, by catalyzing a one-codon backward translocation of tRNAs on improperly translocated ribosomes. Back-translocation proceeds from a post-translocation (POST) complex to a pre-translocation (PRE) complex, thus giving elongation factor G a second chance to translocate the tRNAs correctly. Binds to ribosomes in a GTP-dependent manner.</text>
</comment>
<comment type="catalytic activity">
    <reaction evidence="1">
        <text>GTP + H2O = GDP + phosphate + H(+)</text>
        <dbReference type="Rhea" id="RHEA:19669"/>
        <dbReference type="ChEBI" id="CHEBI:15377"/>
        <dbReference type="ChEBI" id="CHEBI:15378"/>
        <dbReference type="ChEBI" id="CHEBI:37565"/>
        <dbReference type="ChEBI" id="CHEBI:43474"/>
        <dbReference type="ChEBI" id="CHEBI:58189"/>
        <dbReference type="EC" id="3.6.5.n1"/>
    </reaction>
</comment>
<comment type="subcellular location">
    <subcellularLocation>
        <location evidence="1">Cell membrane</location>
        <topology evidence="1">Peripheral membrane protein</topology>
        <orientation evidence="1">Cytoplasmic side</orientation>
    </subcellularLocation>
</comment>
<comment type="similarity">
    <text evidence="1">Belongs to the TRAFAC class translation factor GTPase superfamily. Classic translation factor GTPase family. LepA subfamily.</text>
</comment>
<keyword id="KW-1003">Cell membrane</keyword>
<keyword id="KW-0342">GTP-binding</keyword>
<keyword id="KW-0378">Hydrolase</keyword>
<keyword id="KW-0472">Membrane</keyword>
<keyword id="KW-0547">Nucleotide-binding</keyword>
<keyword id="KW-0648">Protein biosynthesis</keyword>
<keyword id="KW-1185">Reference proteome</keyword>
<sequence>MNNKEMKARQEKIRNFSIIAHIDHGKSTLADRILEKTNTVSSREMQDQLLDSMDLERERGITIKLNAIELNYTAKDGEIYTFHLIDTPGHVDFTYEVSRSLAACEGAVLVVDAAQGIEAQTLANVYLALDNDLEILPVINKIDLPAADPERVRTEIEDVIGIDASEAVLASAKAGIGIEDILEQVVEYVPAPSGDIEAPLKALIFDSIYDSYRGVVLNIRVIDGVVRPGDKIQMMSNGKTFDVTEVGVFSPKPIARDYLMVGDVGYITASIKTVQDTRVGDTVTLADNPAAEALPGYRKMNPMVYCGLYPIDTSRYNDLREALEKLQLNDAALQFEPETSQALGFGFRCGFLGLLHMDVVQERLEREFNLELITTAPSVIYHVNKTDGTTVVVDNPAEFPEPVTIESVEEPYVKAQIMVPNDYVGAVMELSQRKRGEFITMDYLDDYRVNVVYEIPLSEIVFDFFDKLKSSTKGYASLDYEMAGYRTSRLVKMDILLNAEKVDALSFIVHRDFAFERGKAIVEKLKKLIPRQQFEVPVQAAIGQKIVARSDIKALRKNVLAKCYGGDVSRKRKLLEKQKEGKKRMKQIGSVEVPQEAFMAVLKMDDQDNAK</sequence>